<organism>
    <name type="scientific">Mus musculus</name>
    <name type="common">Mouse</name>
    <dbReference type="NCBI Taxonomy" id="10090"/>
    <lineage>
        <taxon>Eukaryota</taxon>
        <taxon>Metazoa</taxon>
        <taxon>Chordata</taxon>
        <taxon>Craniata</taxon>
        <taxon>Vertebrata</taxon>
        <taxon>Euteleostomi</taxon>
        <taxon>Mammalia</taxon>
        <taxon>Eutheria</taxon>
        <taxon>Euarchontoglires</taxon>
        <taxon>Glires</taxon>
        <taxon>Rodentia</taxon>
        <taxon>Myomorpha</taxon>
        <taxon>Muroidea</taxon>
        <taxon>Muridae</taxon>
        <taxon>Murinae</taxon>
        <taxon>Mus</taxon>
        <taxon>Mus</taxon>
    </lineage>
</organism>
<gene>
    <name evidence="11" type="primary">Aldh1a7</name>
    <name type="synonym">Aldh-pb</name>
</gene>
<reference key="1">
    <citation type="journal article" date="1999" name="Biochem. J.">
        <title>Molecular analysis of two closely related mouse aldehyde dehydrogenase genes: identification of a role for Aldh1, but not Aldh-pb, in the biosynthesis of retinoic acid.</title>
        <authorList>
            <person name="Hsu L.C."/>
            <person name="Chang W.C."/>
            <person name="Hoffmann I."/>
            <person name="Duester G."/>
        </authorList>
    </citation>
    <scope>NUCLEOTIDE SEQUENCE [MRNA]</scope>
    <scope>FUNCTION</scope>
    <scope>TISSUE SPECIFICITY</scope>
    <source>
        <strain>C57BL/6J</strain>
        <tissue>Liver</tissue>
    </source>
</reference>
<reference evidence="10" key="2">
    <citation type="journal article" date="2004" name="Genome Res.">
        <title>The status, quality, and expansion of the NIH full-length cDNA project: the Mammalian Gene Collection (MGC).</title>
        <authorList>
            <consortium name="The MGC Project Team"/>
        </authorList>
    </citation>
    <scope>NUCLEOTIDE SEQUENCE [LARGE SCALE MRNA]</scope>
    <source>
        <strain>C57BL/6J</strain>
        <tissue evidence="10">Olfactory epithelium</tissue>
    </source>
</reference>
<reference key="3">
    <citation type="journal article" date="2010" name="Cell">
        <title>A tissue-specific atlas of mouse protein phosphorylation and expression.</title>
        <authorList>
            <person name="Huttlin E.L."/>
            <person name="Jedrychowski M.P."/>
            <person name="Elias J.E."/>
            <person name="Goswami T."/>
            <person name="Rad R."/>
            <person name="Beausoleil S.A."/>
            <person name="Villen J."/>
            <person name="Haas W."/>
            <person name="Sowa M.E."/>
            <person name="Gygi S.P."/>
        </authorList>
    </citation>
    <scope>IDENTIFICATION BY MASS SPECTROMETRY [LARGE SCALE ANALYSIS]</scope>
    <source>
        <tissue>Liver</tissue>
        <tissue>Lung</tissue>
        <tissue>Pancreas</tissue>
    </source>
</reference>
<dbReference type="EC" id="1.2.1.3"/>
<dbReference type="EMBL" id="U96401">
    <property type="protein sequence ID" value="AAB64411.1"/>
    <property type="molecule type" value="mRNA"/>
</dbReference>
<dbReference type="EMBL" id="BC046315">
    <property type="protein sequence ID" value="AAH46315.2"/>
    <property type="molecule type" value="mRNA"/>
</dbReference>
<dbReference type="CCDS" id="CCDS29696.1"/>
<dbReference type="RefSeq" id="NP_036051.1">
    <property type="nucleotide sequence ID" value="NM_011921.3"/>
</dbReference>
<dbReference type="SMR" id="O35945"/>
<dbReference type="BioGRID" id="204918">
    <property type="interactions" value="2"/>
</dbReference>
<dbReference type="FunCoup" id="O35945">
    <property type="interactions" value="614"/>
</dbReference>
<dbReference type="STRING" id="10090.ENSMUSP00000025656"/>
<dbReference type="GlyGen" id="O35945">
    <property type="glycosylation" value="2 sites, 1 O-linked glycan (1 site)"/>
</dbReference>
<dbReference type="iPTMnet" id="O35945"/>
<dbReference type="PhosphoSitePlus" id="O35945"/>
<dbReference type="SwissPalm" id="O35945"/>
<dbReference type="jPOST" id="O35945"/>
<dbReference type="PaxDb" id="10090-ENSMUSP00000025656"/>
<dbReference type="ProteomicsDB" id="281962"/>
<dbReference type="Pumba" id="O35945"/>
<dbReference type="DNASU" id="26358"/>
<dbReference type="Ensembl" id="ENSMUST00000025656.4">
    <property type="protein sequence ID" value="ENSMUSP00000025656.4"/>
    <property type="gene ID" value="ENSMUSG00000024747.4"/>
</dbReference>
<dbReference type="GeneID" id="26358"/>
<dbReference type="KEGG" id="mmu:26358"/>
<dbReference type="UCSC" id="uc008gyn.1">
    <property type="organism name" value="mouse"/>
</dbReference>
<dbReference type="AGR" id="MGI:1347050"/>
<dbReference type="CTD" id="26358"/>
<dbReference type="MGI" id="MGI:1347050">
    <property type="gene designation" value="Aldh1a7"/>
</dbReference>
<dbReference type="VEuPathDB" id="HostDB:ENSMUSG00000024747"/>
<dbReference type="eggNOG" id="KOG2450">
    <property type="taxonomic scope" value="Eukaryota"/>
</dbReference>
<dbReference type="GeneTree" id="ENSGT00940000154609"/>
<dbReference type="HOGENOM" id="CLU_005391_0_2_1"/>
<dbReference type="InParanoid" id="O35945"/>
<dbReference type="OMA" id="KTYMGPL"/>
<dbReference type="OrthoDB" id="310895at2759"/>
<dbReference type="PhylomeDB" id="O35945"/>
<dbReference type="TreeFam" id="TF300455"/>
<dbReference type="BRENDA" id="1.2.1.3">
    <property type="organism ID" value="3474"/>
</dbReference>
<dbReference type="UniPathway" id="UPA00780">
    <property type="reaction ID" value="UER00768"/>
</dbReference>
<dbReference type="BioGRID-ORCS" id="26358">
    <property type="hits" value="1 hit in 76 CRISPR screens"/>
</dbReference>
<dbReference type="ChiTaRS" id="Aldh1a7">
    <property type="organism name" value="mouse"/>
</dbReference>
<dbReference type="PRO" id="PR:O35945"/>
<dbReference type="Proteomes" id="UP000000589">
    <property type="component" value="Chromosome 19"/>
</dbReference>
<dbReference type="RNAct" id="O35945">
    <property type="molecule type" value="protein"/>
</dbReference>
<dbReference type="Bgee" id="ENSMUSG00000024747">
    <property type="expression patterns" value="Expressed in epithelium of lens and 172 other cell types or tissues"/>
</dbReference>
<dbReference type="ExpressionAtlas" id="O35945">
    <property type="expression patterns" value="baseline and differential"/>
</dbReference>
<dbReference type="GO" id="GO:0005737">
    <property type="term" value="C:cytoplasm"/>
    <property type="evidence" value="ECO:0007669"/>
    <property type="project" value="UniProtKB-SubCell"/>
</dbReference>
<dbReference type="GO" id="GO:0004029">
    <property type="term" value="F:aldehyde dehydrogenase (NAD+) activity"/>
    <property type="evidence" value="ECO:0000266"/>
    <property type="project" value="MGI"/>
</dbReference>
<dbReference type="GO" id="GO:0006068">
    <property type="term" value="P:ethanol catabolic process"/>
    <property type="evidence" value="ECO:0007669"/>
    <property type="project" value="UniProtKB-UniPathway"/>
</dbReference>
<dbReference type="GO" id="GO:0006001">
    <property type="term" value="P:fructose catabolic process"/>
    <property type="evidence" value="ECO:0000314"/>
    <property type="project" value="MGI"/>
</dbReference>
<dbReference type="CDD" id="cd07141">
    <property type="entry name" value="ALDH_F1AB_F2_RALDH1"/>
    <property type="match status" value="1"/>
</dbReference>
<dbReference type="FunFam" id="3.40.605.10:FF:000029">
    <property type="entry name" value="Aldehyde dehydrogenase, mitochondrial"/>
    <property type="match status" value="1"/>
</dbReference>
<dbReference type="FunFam" id="3.40.605.10:FF:000026">
    <property type="entry name" value="Aldehyde dehydrogenase, putative"/>
    <property type="match status" value="1"/>
</dbReference>
<dbReference type="FunFam" id="3.40.309.10:FF:000001">
    <property type="entry name" value="Mitochondrial aldehyde dehydrogenase 2"/>
    <property type="match status" value="1"/>
</dbReference>
<dbReference type="Gene3D" id="3.40.605.10">
    <property type="entry name" value="Aldehyde Dehydrogenase, Chain A, domain 1"/>
    <property type="match status" value="1"/>
</dbReference>
<dbReference type="Gene3D" id="3.40.309.10">
    <property type="entry name" value="Aldehyde Dehydrogenase, Chain A, domain 2"/>
    <property type="match status" value="1"/>
</dbReference>
<dbReference type="InterPro" id="IPR016161">
    <property type="entry name" value="Ald_DH/histidinol_DH"/>
</dbReference>
<dbReference type="InterPro" id="IPR016163">
    <property type="entry name" value="Ald_DH_C"/>
</dbReference>
<dbReference type="InterPro" id="IPR016160">
    <property type="entry name" value="Ald_DH_CS_CYS"/>
</dbReference>
<dbReference type="InterPro" id="IPR029510">
    <property type="entry name" value="Ald_DH_CS_GLU"/>
</dbReference>
<dbReference type="InterPro" id="IPR016162">
    <property type="entry name" value="Ald_DH_N"/>
</dbReference>
<dbReference type="InterPro" id="IPR015590">
    <property type="entry name" value="Aldehyde_DH_dom"/>
</dbReference>
<dbReference type="PANTHER" id="PTHR11699">
    <property type="entry name" value="ALDEHYDE DEHYDROGENASE-RELATED"/>
    <property type="match status" value="1"/>
</dbReference>
<dbReference type="Pfam" id="PF00171">
    <property type="entry name" value="Aldedh"/>
    <property type="match status" value="1"/>
</dbReference>
<dbReference type="SUPFAM" id="SSF53720">
    <property type="entry name" value="ALDH-like"/>
    <property type="match status" value="1"/>
</dbReference>
<dbReference type="PROSITE" id="PS00070">
    <property type="entry name" value="ALDEHYDE_DEHYDR_CYS"/>
    <property type="match status" value="1"/>
</dbReference>
<dbReference type="PROSITE" id="PS00687">
    <property type="entry name" value="ALDEHYDE_DEHYDR_GLU"/>
    <property type="match status" value="1"/>
</dbReference>
<keyword id="KW-0007">Acetylation</keyword>
<keyword id="KW-0963">Cytoplasm</keyword>
<keyword id="KW-0520">NAD</keyword>
<keyword id="KW-0560">Oxidoreductase</keyword>
<keyword id="KW-0597">Phosphoprotein</keyword>
<keyword id="KW-1185">Reference proteome</keyword>
<evidence type="ECO:0000250" key="1"/>
<evidence type="ECO:0000250" key="2">
    <source>
        <dbReference type="UniProtKB" id="P00352"/>
    </source>
</evidence>
<evidence type="ECO:0000250" key="3">
    <source>
        <dbReference type="UniProtKB" id="P13601"/>
    </source>
</evidence>
<evidence type="ECO:0000250" key="4">
    <source>
        <dbReference type="UniProtKB" id="P51977"/>
    </source>
</evidence>
<evidence type="ECO:0000250" key="5">
    <source>
        <dbReference type="UniProtKB" id="Q28399"/>
    </source>
</evidence>
<evidence type="ECO:0000255" key="6"/>
<evidence type="ECO:0000255" key="7">
    <source>
        <dbReference type="PROSITE-ProRule" id="PRU10007"/>
    </source>
</evidence>
<evidence type="ECO:0000255" key="8">
    <source>
        <dbReference type="PROSITE-ProRule" id="PRU10008"/>
    </source>
</evidence>
<evidence type="ECO:0000269" key="9">
    <source>
    </source>
</evidence>
<evidence type="ECO:0000312" key="10">
    <source>
        <dbReference type="EMBL" id="AAH46315.2"/>
    </source>
</evidence>
<evidence type="ECO:0000312" key="11">
    <source>
        <dbReference type="MGI" id="MGI:1347050"/>
    </source>
</evidence>
<name>AL1A7_MOUSE</name>
<feature type="initiator methionine" description="Removed" evidence="2">
    <location>
        <position position="1"/>
    </location>
</feature>
<feature type="chain" id="PRO_0000291264" description="Aldehyde dehydrogenase, cytosolic 1">
    <location>
        <begin position="2"/>
        <end position="501"/>
    </location>
</feature>
<feature type="active site" description="Proton acceptor" evidence="4 7 8">
    <location>
        <position position="269"/>
    </location>
</feature>
<feature type="active site" description="Nucleophile" evidence="4 7 8">
    <location>
        <position position="303"/>
    </location>
</feature>
<feature type="binding site" evidence="5">
    <location>
        <begin position="246"/>
        <end position="251"/>
    </location>
    <ligand>
        <name>NAD(+)</name>
        <dbReference type="ChEBI" id="CHEBI:57540"/>
    </ligand>
</feature>
<feature type="site" description="Transition state stabilizer" evidence="4">
    <location>
        <position position="170"/>
    </location>
</feature>
<feature type="modified residue" description="N-acetylserine" evidence="2">
    <location>
        <position position="2"/>
    </location>
</feature>
<feature type="modified residue" description="N6-acetyllysine" evidence="2">
    <location>
        <position position="91"/>
    </location>
</feature>
<feature type="modified residue" description="N6-acetyllysine" evidence="2">
    <location>
        <position position="128"/>
    </location>
</feature>
<feature type="modified residue" description="N6-acetyllysine" evidence="2">
    <location>
        <position position="252"/>
    </location>
</feature>
<feature type="modified residue" description="N6-acetyllysine" evidence="2">
    <location>
        <position position="353"/>
    </location>
</feature>
<feature type="modified residue" description="N6-acetyllysine" evidence="2">
    <location>
        <position position="367"/>
    </location>
</feature>
<feature type="modified residue" description="N6-acetyllysine" evidence="2">
    <location>
        <position position="410"/>
    </location>
</feature>
<feature type="modified residue" description="Phosphoserine" evidence="2">
    <location>
        <position position="413"/>
    </location>
</feature>
<feature type="modified residue" description="N6-acetyllysine" evidence="2">
    <location>
        <position position="419"/>
    </location>
</feature>
<feature type="modified residue" description="N6-acetyllysine" evidence="2">
    <location>
        <position position="435"/>
    </location>
</feature>
<sequence>MSSPAQPAVPAPLANLKIQHTKIFINNEWHDSVSSKKFPVLNPATEEVICHVEEGDKADVDKAVKAARQAFQIGSPWRTMDASERGRLLNKLADLMERDRLLLATMESMNAGKVFAHAYLLDVEISIKALQYFAGWADKIHGQTIPSDGNIFTYTRREPIGVCGQIIPWNGPLIIFTWKLGPALSCGNTVVVKPAEQTPLTALHMASLIKEAGFPPGVVNIVPGYGPTAGGAISSHMDIDKVSFTGSTEVGKLIKEAAGKSNLKRVTLELGGKSPCIVFADADLDSAVEFAHQGVFFHQGQICVAASRLFVEESIYDEFVRRSVERAKKYILGNPLNSGINQGPQIDKEQHNKILGLIESGKKEGAKLECGGGRWGNKGFFVQPTVFSNVTDEMRIAKEEIFGPVQQIMKFKSMDDVIKRANNTTYGLAAGVFTKDLDKAITVSSALQAGMVWVNCYLAVPVQCPFGGFKMSGNGRELGEHGLYEYTELKTVAMQISQKNS</sequence>
<proteinExistence type="evidence at protein level"/>
<protein>
    <recommendedName>
        <fullName>Aldehyde dehydrogenase, cytosolic 1</fullName>
        <ecNumber>1.2.1.3</ecNumber>
    </recommendedName>
    <alternativeName>
        <fullName>ALDH class 1</fullName>
    </alternativeName>
    <alternativeName>
        <fullName>ALDH-E1</fullName>
    </alternativeName>
    <alternativeName>
        <fullName>ALHDII</fullName>
    </alternativeName>
    <alternativeName>
        <fullName>Aldehyde dehydrogenase family 1 member A7</fullName>
    </alternativeName>
    <alternativeName>
        <fullName>Aldehyde dehydrogenase phenobarbital-inducible</fullName>
    </alternativeName>
</protein>
<comment type="function">
    <text evidence="1 9">Can oxidize benzaldehyde, propionaldehyde and acetaldehyde (By similarity). No detectable activity with retinal.</text>
</comment>
<comment type="catalytic activity">
    <reaction>
        <text>an aldehyde + NAD(+) + H2O = a carboxylate + NADH + 2 H(+)</text>
        <dbReference type="Rhea" id="RHEA:16185"/>
        <dbReference type="ChEBI" id="CHEBI:15377"/>
        <dbReference type="ChEBI" id="CHEBI:15378"/>
        <dbReference type="ChEBI" id="CHEBI:17478"/>
        <dbReference type="ChEBI" id="CHEBI:29067"/>
        <dbReference type="ChEBI" id="CHEBI:57540"/>
        <dbReference type="ChEBI" id="CHEBI:57945"/>
        <dbReference type="EC" id="1.2.1.3"/>
    </reaction>
</comment>
<comment type="pathway">
    <text>Alcohol metabolism; ethanol degradation; acetate from ethanol: step 2/2.</text>
</comment>
<comment type="subunit">
    <text evidence="3">Homotetramer.</text>
</comment>
<comment type="subcellular location">
    <subcellularLocation>
        <location evidence="3">Cytoplasm</location>
    </subcellularLocation>
</comment>
<comment type="tissue specificity">
    <text evidence="9">Highest level in liver, high level in lung, low level in kidney and testis.</text>
</comment>
<comment type="miscellaneous">
    <text>Xenopus embryos injected with Aldh1a7 mRNA failed to produce retinoic acid in contrast to embryos injected with Aldh1a1.</text>
</comment>
<comment type="similarity">
    <text evidence="6">Belongs to the aldehyde dehydrogenase family.</text>
</comment>
<accession>O35945</accession>
<accession>Q80ZX7</accession>